<protein>
    <recommendedName>
        <fullName evidence="2">Cupiennin-2d</fullName>
        <shortName evidence="2">Cu-2d</shortName>
    </recommendedName>
</protein>
<feature type="peptide" id="PRO_0000421196" description="Cupiennin-2d" evidence="1">
    <location>
        <begin position="1"/>
        <end position="35"/>
    </location>
</feature>
<feature type="modified residue" description="Glutamine amide" evidence="1">
    <location>
        <position position="35"/>
    </location>
</feature>
<sequence>GFGTILKALAKIAGKVVKKLATKPGATYMLKQNLQ</sequence>
<reference key="1">
    <citation type="journal article" date="2012" name="FEBS J.">
        <title>Multicomponent venom of the spider Cupiennius salei: a bioanalytical investigation applying different strategies.</title>
        <authorList>
            <person name="Trachsel C."/>
            <person name="Siegemund D."/>
            <person name="Kampfer U."/>
            <person name="Kopp L.S."/>
            <person name="Buhr C."/>
            <person name="Grossmann J."/>
            <person name="Luthi C."/>
            <person name="Cunningham M."/>
            <person name="Nentwig W."/>
            <person name="Kuhn-Nentwig L."/>
            <person name="Schurch S."/>
            <person name="Schaller J."/>
        </authorList>
    </citation>
    <scope>PROTEIN SEQUENCE</scope>
    <scope>MASS SPECTROMETRY</scope>
    <scope>AMIDATION AT GLN-35</scope>
    <source>
        <tissue>Venom</tissue>
    </source>
</reference>
<evidence type="ECO:0000269" key="1">
    <source>
    </source>
</evidence>
<evidence type="ECO:0000303" key="2">
    <source>
    </source>
</evidence>
<evidence type="ECO:0000305" key="3"/>
<evidence type="ECO:0000305" key="4">
    <source>
    </source>
</evidence>
<organism>
    <name type="scientific">Cupiennius salei</name>
    <name type="common">American wandering spider</name>
    <dbReference type="NCBI Taxonomy" id="6928"/>
    <lineage>
        <taxon>Eukaryota</taxon>
        <taxon>Metazoa</taxon>
        <taxon>Ecdysozoa</taxon>
        <taxon>Arthropoda</taxon>
        <taxon>Chelicerata</taxon>
        <taxon>Arachnida</taxon>
        <taxon>Araneae</taxon>
        <taxon>Araneomorphae</taxon>
        <taxon>Entelegynae</taxon>
        <taxon>Lycosoidea</taxon>
        <taxon>Ctenidae</taxon>
        <taxon>Cupiennius</taxon>
    </lineage>
</organism>
<comment type="subcellular location">
    <subcellularLocation>
        <location evidence="1">Secreted</location>
    </subcellularLocation>
</comment>
<comment type="tissue specificity">
    <text evidence="4">Expressed by the venom gland.</text>
</comment>
<comment type="mass spectrometry"/>
<comment type="similarity">
    <text evidence="3">Belongs to the cationic peptide 04 (cupiennin) family. 02 subfamily.</text>
</comment>
<accession>B3EWT9</accession>
<proteinExistence type="evidence at protein level"/>
<name>TXC2D_CUPSA</name>
<dbReference type="GO" id="GO:0005576">
    <property type="term" value="C:extracellular region"/>
    <property type="evidence" value="ECO:0007669"/>
    <property type="project" value="UniProtKB-SubCell"/>
</dbReference>
<dbReference type="GO" id="GO:0090729">
    <property type="term" value="F:toxin activity"/>
    <property type="evidence" value="ECO:0007669"/>
    <property type="project" value="UniProtKB-KW"/>
</dbReference>
<keyword id="KW-0027">Amidation</keyword>
<keyword id="KW-0903">Direct protein sequencing</keyword>
<keyword id="KW-0964">Secreted</keyword>
<keyword id="KW-0800">Toxin</keyword>